<reference key="1">
    <citation type="submission" date="2007-03" db="EMBL/GenBank/DDBJ databases">
        <title>Complete sequence of Desulfotomaculum reducens MI-1.</title>
        <authorList>
            <consortium name="US DOE Joint Genome Institute"/>
            <person name="Copeland A."/>
            <person name="Lucas S."/>
            <person name="Lapidus A."/>
            <person name="Barry K."/>
            <person name="Detter J.C."/>
            <person name="Glavina del Rio T."/>
            <person name="Hammon N."/>
            <person name="Israni S."/>
            <person name="Dalin E."/>
            <person name="Tice H."/>
            <person name="Pitluck S."/>
            <person name="Sims D."/>
            <person name="Brettin T."/>
            <person name="Bruce D."/>
            <person name="Han C."/>
            <person name="Tapia R."/>
            <person name="Schmutz J."/>
            <person name="Larimer F."/>
            <person name="Land M."/>
            <person name="Hauser L."/>
            <person name="Kyrpides N."/>
            <person name="Kim E."/>
            <person name="Tebo B.M."/>
            <person name="Richardson P."/>
        </authorList>
    </citation>
    <scope>NUCLEOTIDE SEQUENCE [LARGE SCALE GENOMIC DNA]</scope>
    <source>
        <strain>ATCC BAA-1160 / DSM 100696 / MI-1</strain>
    </source>
</reference>
<protein>
    <recommendedName>
        <fullName evidence="1">Leucine--tRNA ligase</fullName>
        <ecNumber evidence="1">6.1.1.4</ecNumber>
    </recommendedName>
    <alternativeName>
        <fullName evidence="1">Leucyl-tRNA synthetase</fullName>
        <shortName evidence="1">LeuRS</shortName>
    </alternativeName>
</protein>
<evidence type="ECO:0000255" key="1">
    <source>
        <dbReference type="HAMAP-Rule" id="MF_00049"/>
    </source>
</evidence>
<comment type="catalytic activity">
    <reaction evidence="1">
        <text>tRNA(Leu) + L-leucine + ATP = L-leucyl-tRNA(Leu) + AMP + diphosphate</text>
        <dbReference type="Rhea" id="RHEA:11688"/>
        <dbReference type="Rhea" id="RHEA-COMP:9613"/>
        <dbReference type="Rhea" id="RHEA-COMP:9622"/>
        <dbReference type="ChEBI" id="CHEBI:30616"/>
        <dbReference type="ChEBI" id="CHEBI:33019"/>
        <dbReference type="ChEBI" id="CHEBI:57427"/>
        <dbReference type="ChEBI" id="CHEBI:78442"/>
        <dbReference type="ChEBI" id="CHEBI:78494"/>
        <dbReference type="ChEBI" id="CHEBI:456215"/>
        <dbReference type="EC" id="6.1.1.4"/>
    </reaction>
</comment>
<comment type="subcellular location">
    <subcellularLocation>
        <location evidence="1">Cytoplasm</location>
    </subcellularLocation>
</comment>
<comment type="similarity">
    <text evidence="1">Belongs to the class-I aminoacyl-tRNA synthetase family.</text>
</comment>
<feature type="chain" id="PRO_0000334750" description="Leucine--tRNA ligase">
    <location>
        <begin position="1"/>
        <end position="827"/>
    </location>
</feature>
<feature type="short sequence motif" description="'HIGH' region">
    <location>
        <begin position="42"/>
        <end position="52"/>
    </location>
</feature>
<feature type="short sequence motif" description="'KMSKS' region">
    <location>
        <begin position="581"/>
        <end position="585"/>
    </location>
</feature>
<feature type="binding site" evidence="1">
    <location>
        <position position="584"/>
    </location>
    <ligand>
        <name>ATP</name>
        <dbReference type="ChEBI" id="CHEBI:30616"/>
    </ligand>
</feature>
<sequence>MQEHYDFKEIEKKWQEDWNKENTYQVPDFSERPKYYCLEMFPYPSGKLHMGHVRNYSIGDVVARFKTMQGYDVLHPMGWDAFGLPAENAAIKHGIAPATWTWDNIAHMRSQLKQLGLSYDWNREVATCHTEYYKWGQWLFLQLYKKGLCYKKHARVNWCPDCATVLANEQVVDGACERCSAVVEQKELDQWFFRITEYAQRLLNDLKLLKGWPDKVKIMQENWIGRSEGAELTFQVEGSDESITVFTTRPDTVYGVSYMVLAPEHPLVAKLIAGRPQEAEVIGFVNRVNKLTELDRTSSDKEGVFTGAYCINPFDGARVPILIANYVLYHYGTGAVMGVPAHDERDFEFAHKYNLPIKVVIYPAQDKEIRVEDMKEAYTADGIMVHSGPFDGSPNRQGIKKVIKYAEEKGIGKGIVNYRLRDWLISRQRYWGTPIPIVYCEKCGTVPVPEDQLPVILPTDVAFKPTGESPLKGRPDFVHTTCPQCGGPAQRETDTMDTFVDSSWYYLRYTSSRDTEYAWDKNKADRWMNVDQYIGGVEHAILHLLYSRFFTKVFYDLGLVNVQEPFENLLTQGMVLKDGSKMSKSKGNVVSPEEIIDRYGADTARMFILFAAPPERDLEWSDRGVEGSHRFLNRVWRLVYSLKDEVAGAPAISSVNAYVGVHKEMRRLTHYAIKKVTEDVSGRFNFNTAISTIMELVNGIYTYRDKVAAVERDTAVLAEAVNSTIILLAPFAPHIAEELWSATGHQGSVHKQPWLTFDSAALVEDEVEVAVQINGKVRERLNIPANMKPAEMQQYLMDMESVKILIGDKQIVKIIPVPGKLLNIVVK</sequence>
<proteinExistence type="inferred from homology"/>
<dbReference type="EC" id="6.1.1.4" evidence="1"/>
<dbReference type="EMBL" id="CP000612">
    <property type="protein sequence ID" value="ABO51025.1"/>
    <property type="molecule type" value="Genomic_DNA"/>
</dbReference>
<dbReference type="RefSeq" id="WP_011878823.1">
    <property type="nucleotide sequence ID" value="NC_009253.1"/>
</dbReference>
<dbReference type="SMR" id="A4J7H2"/>
<dbReference type="STRING" id="349161.Dred_2515"/>
<dbReference type="KEGG" id="drm:Dred_2515"/>
<dbReference type="eggNOG" id="COG0495">
    <property type="taxonomic scope" value="Bacteria"/>
</dbReference>
<dbReference type="HOGENOM" id="CLU_004427_0_0_9"/>
<dbReference type="OrthoDB" id="9810365at2"/>
<dbReference type="Proteomes" id="UP000001556">
    <property type="component" value="Chromosome"/>
</dbReference>
<dbReference type="GO" id="GO:0005829">
    <property type="term" value="C:cytosol"/>
    <property type="evidence" value="ECO:0007669"/>
    <property type="project" value="TreeGrafter"/>
</dbReference>
<dbReference type="GO" id="GO:0002161">
    <property type="term" value="F:aminoacyl-tRNA deacylase activity"/>
    <property type="evidence" value="ECO:0007669"/>
    <property type="project" value="InterPro"/>
</dbReference>
<dbReference type="GO" id="GO:0005524">
    <property type="term" value="F:ATP binding"/>
    <property type="evidence" value="ECO:0007669"/>
    <property type="project" value="UniProtKB-UniRule"/>
</dbReference>
<dbReference type="GO" id="GO:0004823">
    <property type="term" value="F:leucine-tRNA ligase activity"/>
    <property type="evidence" value="ECO:0007669"/>
    <property type="project" value="UniProtKB-UniRule"/>
</dbReference>
<dbReference type="GO" id="GO:0006429">
    <property type="term" value="P:leucyl-tRNA aminoacylation"/>
    <property type="evidence" value="ECO:0007669"/>
    <property type="project" value="UniProtKB-UniRule"/>
</dbReference>
<dbReference type="CDD" id="cd07958">
    <property type="entry name" value="Anticodon_Ia_Leu_BEm"/>
    <property type="match status" value="1"/>
</dbReference>
<dbReference type="CDD" id="cd00812">
    <property type="entry name" value="LeuRS_core"/>
    <property type="match status" value="1"/>
</dbReference>
<dbReference type="FunFam" id="3.40.50.620:FF:000003">
    <property type="entry name" value="Leucine--tRNA ligase"/>
    <property type="match status" value="1"/>
</dbReference>
<dbReference type="FunFam" id="1.10.730.10:FF:000011">
    <property type="entry name" value="Leucine--tRNA ligase chloroplastic/mitochondrial"/>
    <property type="match status" value="1"/>
</dbReference>
<dbReference type="FunFam" id="3.40.50.620:FF:000100">
    <property type="entry name" value="probable leucine--tRNA ligase, mitochondrial"/>
    <property type="match status" value="1"/>
</dbReference>
<dbReference type="Gene3D" id="3.10.20.590">
    <property type="match status" value="1"/>
</dbReference>
<dbReference type="Gene3D" id="3.40.50.620">
    <property type="entry name" value="HUPs"/>
    <property type="match status" value="2"/>
</dbReference>
<dbReference type="Gene3D" id="1.10.730.10">
    <property type="entry name" value="Isoleucyl-tRNA Synthetase, Domain 1"/>
    <property type="match status" value="1"/>
</dbReference>
<dbReference type="HAMAP" id="MF_00049_B">
    <property type="entry name" value="Leu_tRNA_synth_B"/>
    <property type="match status" value="1"/>
</dbReference>
<dbReference type="InterPro" id="IPR001412">
    <property type="entry name" value="aa-tRNA-synth_I_CS"/>
</dbReference>
<dbReference type="InterPro" id="IPR002300">
    <property type="entry name" value="aa-tRNA-synth_Ia"/>
</dbReference>
<dbReference type="InterPro" id="IPR002302">
    <property type="entry name" value="Leu-tRNA-ligase"/>
</dbReference>
<dbReference type="InterPro" id="IPR025709">
    <property type="entry name" value="Leu_tRNA-synth_edit"/>
</dbReference>
<dbReference type="InterPro" id="IPR013155">
    <property type="entry name" value="M/V/L/I-tRNA-synth_anticd-bd"/>
</dbReference>
<dbReference type="InterPro" id="IPR015413">
    <property type="entry name" value="Methionyl/Leucyl_tRNA_Synth"/>
</dbReference>
<dbReference type="InterPro" id="IPR014729">
    <property type="entry name" value="Rossmann-like_a/b/a_fold"/>
</dbReference>
<dbReference type="InterPro" id="IPR009080">
    <property type="entry name" value="tRNAsynth_Ia_anticodon-bd"/>
</dbReference>
<dbReference type="InterPro" id="IPR009008">
    <property type="entry name" value="Val/Leu/Ile-tRNA-synth_edit"/>
</dbReference>
<dbReference type="NCBIfam" id="TIGR00396">
    <property type="entry name" value="leuS_bact"/>
    <property type="match status" value="1"/>
</dbReference>
<dbReference type="PANTHER" id="PTHR43740:SF2">
    <property type="entry name" value="LEUCINE--TRNA LIGASE, MITOCHONDRIAL"/>
    <property type="match status" value="1"/>
</dbReference>
<dbReference type="PANTHER" id="PTHR43740">
    <property type="entry name" value="LEUCYL-TRNA SYNTHETASE"/>
    <property type="match status" value="1"/>
</dbReference>
<dbReference type="Pfam" id="PF08264">
    <property type="entry name" value="Anticodon_1"/>
    <property type="match status" value="1"/>
</dbReference>
<dbReference type="Pfam" id="PF00133">
    <property type="entry name" value="tRNA-synt_1"/>
    <property type="match status" value="1"/>
</dbReference>
<dbReference type="Pfam" id="PF13603">
    <property type="entry name" value="tRNA-synt_1_2"/>
    <property type="match status" value="1"/>
</dbReference>
<dbReference type="Pfam" id="PF09334">
    <property type="entry name" value="tRNA-synt_1g"/>
    <property type="match status" value="1"/>
</dbReference>
<dbReference type="PRINTS" id="PR00985">
    <property type="entry name" value="TRNASYNTHLEU"/>
</dbReference>
<dbReference type="SUPFAM" id="SSF47323">
    <property type="entry name" value="Anticodon-binding domain of a subclass of class I aminoacyl-tRNA synthetases"/>
    <property type="match status" value="1"/>
</dbReference>
<dbReference type="SUPFAM" id="SSF52374">
    <property type="entry name" value="Nucleotidylyl transferase"/>
    <property type="match status" value="1"/>
</dbReference>
<dbReference type="SUPFAM" id="SSF50677">
    <property type="entry name" value="ValRS/IleRS/LeuRS editing domain"/>
    <property type="match status" value="1"/>
</dbReference>
<dbReference type="PROSITE" id="PS00178">
    <property type="entry name" value="AA_TRNA_LIGASE_I"/>
    <property type="match status" value="1"/>
</dbReference>
<organism>
    <name type="scientific">Desulforamulus reducens (strain ATCC BAA-1160 / DSM 100696 / MI-1)</name>
    <name type="common">Desulfotomaculum reducens</name>
    <dbReference type="NCBI Taxonomy" id="349161"/>
    <lineage>
        <taxon>Bacteria</taxon>
        <taxon>Bacillati</taxon>
        <taxon>Bacillota</taxon>
        <taxon>Clostridia</taxon>
        <taxon>Eubacteriales</taxon>
        <taxon>Peptococcaceae</taxon>
        <taxon>Desulforamulus</taxon>
    </lineage>
</organism>
<name>SYL_DESRM</name>
<accession>A4J7H2</accession>
<keyword id="KW-0030">Aminoacyl-tRNA synthetase</keyword>
<keyword id="KW-0067">ATP-binding</keyword>
<keyword id="KW-0963">Cytoplasm</keyword>
<keyword id="KW-0436">Ligase</keyword>
<keyword id="KW-0547">Nucleotide-binding</keyword>
<keyword id="KW-0648">Protein biosynthesis</keyword>
<keyword id="KW-1185">Reference proteome</keyword>
<gene>
    <name evidence="1" type="primary">leuS</name>
    <name type="ordered locus">Dred_2515</name>
</gene>